<gene>
    <name evidence="1" type="primary">fmt</name>
    <name type="ordered locus">Kole_0746</name>
</gene>
<reference key="1">
    <citation type="submission" date="2009-06" db="EMBL/GenBank/DDBJ databases">
        <title>Complete sequence of Thermotogales bacterium TBF 19.5.1.</title>
        <authorList>
            <consortium name="US DOE Joint Genome Institute"/>
            <person name="Lucas S."/>
            <person name="Copeland A."/>
            <person name="Lapidus A."/>
            <person name="Glavina del Rio T."/>
            <person name="Tice H."/>
            <person name="Bruce D."/>
            <person name="Goodwin L."/>
            <person name="Pitluck S."/>
            <person name="Chertkov O."/>
            <person name="Brettin T."/>
            <person name="Detter J.C."/>
            <person name="Han C."/>
            <person name="Schmutz J."/>
            <person name="Larimer F."/>
            <person name="Land M."/>
            <person name="Hauser L."/>
            <person name="Kyrpides N."/>
            <person name="Ovchinnikova G."/>
            <person name="Noll K."/>
        </authorList>
    </citation>
    <scope>NUCLEOTIDE SEQUENCE [LARGE SCALE GENOMIC DNA]</scope>
    <source>
        <strain>ATCC BAA-1733 / DSM 21960 / TBF 19.5.1</strain>
    </source>
</reference>
<keyword id="KW-0648">Protein biosynthesis</keyword>
<keyword id="KW-1185">Reference proteome</keyword>
<keyword id="KW-0808">Transferase</keyword>
<comment type="function">
    <text evidence="1">Attaches a formyl group to the free amino group of methionyl-tRNA(fMet). The formyl group appears to play a dual role in the initiator identity of N-formylmethionyl-tRNA by promoting its recognition by IF2 and preventing the misappropriation of this tRNA by the elongation apparatus.</text>
</comment>
<comment type="catalytic activity">
    <reaction evidence="1">
        <text>L-methionyl-tRNA(fMet) + (6R)-10-formyltetrahydrofolate = N-formyl-L-methionyl-tRNA(fMet) + (6S)-5,6,7,8-tetrahydrofolate + H(+)</text>
        <dbReference type="Rhea" id="RHEA:24380"/>
        <dbReference type="Rhea" id="RHEA-COMP:9952"/>
        <dbReference type="Rhea" id="RHEA-COMP:9953"/>
        <dbReference type="ChEBI" id="CHEBI:15378"/>
        <dbReference type="ChEBI" id="CHEBI:57453"/>
        <dbReference type="ChEBI" id="CHEBI:78530"/>
        <dbReference type="ChEBI" id="CHEBI:78844"/>
        <dbReference type="ChEBI" id="CHEBI:195366"/>
        <dbReference type="EC" id="2.1.2.9"/>
    </reaction>
</comment>
<comment type="similarity">
    <text evidence="1">Belongs to the Fmt family.</text>
</comment>
<feature type="chain" id="PRO_1000203863" description="Methionyl-tRNA formyltransferase">
    <location>
        <begin position="1"/>
        <end position="311"/>
    </location>
</feature>
<feature type="binding site" evidence="1">
    <location>
        <begin position="109"/>
        <end position="112"/>
    </location>
    <ligand>
        <name>(6S)-5,6,7,8-tetrahydrofolate</name>
        <dbReference type="ChEBI" id="CHEBI:57453"/>
    </ligand>
</feature>
<evidence type="ECO:0000255" key="1">
    <source>
        <dbReference type="HAMAP-Rule" id="MF_00182"/>
    </source>
</evidence>
<protein>
    <recommendedName>
        <fullName evidence="1">Methionyl-tRNA formyltransferase</fullName>
        <ecNumber evidence="1">2.1.2.9</ecNumber>
    </recommendedName>
</protein>
<accession>C5CG19</accession>
<sequence length="311" mass="34279">MKIVFMGTPDFAAEHLRKLVEKKYNVVGVFSQPDKPKGRGKKLIPTPVKQVAREYGIPVFQPKSVNKGEGFEALKELKPDIIITVAYGKLLKQQVFELPPLGCYNVHASLLPKYRGAAPIQRALENGEKETGITIFKIDEGMDSGPIALQERIEISSDDNFGTLKKKLCNLGKKLLIEFLKKISAGEIKLTPQDHSQATYAPKITKEDTILIEFDNGERVFNKIRAYDPEPGVTTRLGELRVKLFGAGICDNCCVDAEPGQIISISKDSMVVACKKGAVKISKIQFPGKKVITVWQAKSGRLIEEGIKLGG</sequence>
<dbReference type="EC" id="2.1.2.9" evidence="1"/>
<dbReference type="EMBL" id="CP001634">
    <property type="protein sequence ID" value="ACR79460.1"/>
    <property type="molecule type" value="Genomic_DNA"/>
</dbReference>
<dbReference type="RefSeq" id="WP_015868126.1">
    <property type="nucleotide sequence ID" value="NC_012785.1"/>
</dbReference>
<dbReference type="SMR" id="C5CG19"/>
<dbReference type="STRING" id="521045.Kole_0746"/>
<dbReference type="KEGG" id="kol:Kole_0746"/>
<dbReference type="eggNOG" id="COG0223">
    <property type="taxonomic scope" value="Bacteria"/>
</dbReference>
<dbReference type="HOGENOM" id="CLU_033347_1_1_0"/>
<dbReference type="OrthoDB" id="9802815at2"/>
<dbReference type="Proteomes" id="UP000002382">
    <property type="component" value="Chromosome"/>
</dbReference>
<dbReference type="GO" id="GO:0005829">
    <property type="term" value="C:cytosol"/>
    <property type="evidence" value="ECO:0007669"/>
    <property type="project" value="TreeGrafter"/>
</dbReference>
<dbReference type="GO" id="GO:0004479">
    <property type="term" value="F:methionyl-tRNA formyltransferase activity"/>
    <property type="evidence" value="ECO:0007669"/>
    <property type="project" value="UniProtKB-UniRule"/>
</dbReference>
<dbReference type="CDD" id="cd08646">
    <property type="entry name" value="FMT_core_Met-tRNA-FMT_N"/>
    <property type="match status" value="1"/>
</dbReference>
<dbReference type="CDD" id="cd08704">
    <property type="entry name" value="Met_tRNA_FMT_C"/>
    <property type="match status" value="1"/>
</dbReference>
<dbReference type="FunFam" id="3.40.50.12230:FF:000001">
    <property type="entry name" value="Methionyl-tRNA formyltransferase"/>
    <property type="match status" value="1"/>
</dbReference>
<dbReference type="Gene3D" id="3.40.50.12230">
    <property type="match status" value="1"/>
</dbReference>
<dbReference type="HAMAP" id="MF_00182">
    <property type="entry name" value="Formyl_trans"/>
    <property type="match status" value="1"/>
</dbReference>
<dbReference type="InterPro" id="IPR005794">
    <property type="entry name" value="Fmt"/>
</dbReference>
<dbReference type="InterPro" id="IPR005793">
    <property type="entry name" value="Formyl_trans_C"/>
</dbReference>
<dbReference type="InterPro" id="IPR002376">
    <property type="entry name" value="Formyl_transf_N"/>
</dbReference>
<dbReference type="InterPro" id="IPR036477">
    <property type="entry name" value="Formyl_transf_N_sf"/>
</dbReference>
<dbReference type="InterPro" id="IPR011034">
    <property type="entry name" value="Formyl_transferase-like_C_sf"/>
</dbReference>
<dbReference type="InterPro" id="IPR044135">
    <property type="entry name" value="Met-tRNA-FMT_C"/>
</dbReference>
<dbReference type="InterPro" id="IPR041711">
    <property type="entry name" value="Met-tRNA-FMT_N"/>
</dbReference>
<dbReference type="NCBIfam" id="TIGR00460">
    <property type="entry name" value="fmt"/>
    <property type="match status" value="1"/>
</dbReference>
<dbReference type="PANTHER" id="PTHR11138">
    <property type="entry name" value="METHIONYL-TRNA FORMYLTRANSFERASE"/>
    <property type="match status" value="1"/>
</dbReference>
<dbReference type="PANTHER" id="PTHR11138:SF5">
    <property type="entry name" value="METHIONYL-TRNA FORMYLTRANSFERASE, MITOCHONDRIAL"/>
    <property type="match status" value="1"/>
</dbReference>
<dbReference type="Pfam" id="PF02911">
    <property type="entry name" value="Formyl_trans_C"/>
    <property type="match status" value="1"/>
</dbReference>
<dbReference type="Pfam" id="PF00551">
    <property type="entry name" value="Formyl_trans_N"/>
    <property type="match status" value="1"/>
</dbReference>
<dbReference type="SUPFAM" id="SSF50486">
    <property type="entry name" value="FMT C-terminal domain-like"/>
    <property type="match status" value="1"/>
</dbReference>
<dbReference type="SUPFAM" id="SSF53328">
    <property type="entry name" value="Formyltransferase"/>
    <property type="match status" value="1"/>
</dbReference>
<proteinExistence type="inferred from homology"/>
<organism>
    <name type="scientific">Kosmotoga olearia (strain ATCC BAA-1733 / DSM 21960 / TBF 19.5.1)</name>
    <dbReference type="NCBI Taxonomy" id="521045"/>
    <lineage>
        <taxon>Bacteria</taxon>
        <taxon>Thermotogati</taxon>
        <taxon>Thermotogota</taxon>
        <taxon>Thermotogae</taxon>
        <taxon>Kosmotogales</taxon>
        <taxon>Kosmotogaceae</taxon>
        <taxon>Kosmotoga</taxon>
    </lineage>
</organism>
<name>FMT_KOSOT</name>